<evidence type="ECO:0000250" key="1"/>
<evidence type="ECO:0000255" key="2">
    <source>
        <dbReference type="HAMAP-Rule" id="MF_01398"/>
    </source>
</evidence>
<gene>
    <name evidence="2" type="primary">atpF</name>
    <name type="ordered locus">Cag_0066</name>
</gene>
<comment type="function">
    <text evidence="2">F(1)F(0) ATP synthase produces ATP from ADP in the presence of a proton or sodium gradient. F-type ATPases consist of two structural domains, F(1) containing the extramembraneous catalytic core and F(0) containing the membrane proton channel, linked together by a central stalk and a peripheral stalk. During catalysis, ATP synthesis in the catalytic domain of F(1) is coupled via a rotary mechanism of the central stalk subunits to proton translocation.</text>
</comment>
<comment type="function">
    <text evidence="2">Component of the F(0) channel, it forms part of the peripheral stalk, linking F(1) to F(0).</text>
</comment>
<comment type="subunit">
    <text evidence="1">F-type ATPases have 2 components, F(1) - the catalytic core - and F(0) - the membrane proton channel. F(1) has five subunits: alpha(3), beta(3), gamma(1), delta(1), epsilon(1). F(0) has four main subunits: a(1), b(2) and c(10-14). The alpha and beta chains form an alternating ring which encloses part of the gamma chain. F(1) is attached to F(0) by a central stalk formed by the gamma and epsilon chains, while a peripheral stalk is formed by the delta and b chains (By similarity).</text>
</comment>
<comment type="subcellular location">
    <subcellularLocation>
        <location evidence="2">Cell inner membrane</location>
        <topology evidence="2">Single-pass membrane protein</topology>
    </subcellularLocation>
</comment>
<comment type="similarity">
    <text evidence="2">Belongs to the ATPase B chain family.</text>
</comment>
<reference key="1">
    <citation type="submission" date="2005-08" db="EMBL/GenBank/DDBJ databases">
        <title>Complete sequence of Chlorobium chlorochromatii CaD3.</title>
        <authorList>
            <consortium name="US DOE Joint Genome Institute"/>
            <person name="Copeland A."/>
            <person name="Lucas S."/>
            <person name="Lapidus A."/>
            <person name="Barry K."/>
            <person name="Detter J.C."/>
            <person name="Glavina T."/>
            <person name="Hammon N."/>
            <person name="Israni S."/>
            <person name="Pitluck S."/>
            <person name="Bryant D."/>
            <person name="Schmutz J."/>
            <person name="Larimer F."/>
            <person name="Land M."/>
            <person name="Kyrpides N."/>
            <person name="Ivanova N."/>
            <person name="Richardson P."/>
        </authorList>
    </citation>
    <scope>NUCLEOTIDE SEQUENCE [LARGE SCALE GENOMIC DNA]</scope>
    <source>
        <strain>CaD3</strain>
    </source>
</reference>
<dbReference type="EMBL" id="CP000108">
    <property type="protein sequence ID" value="ABB27345.1"/>
    <property type="molecule type" value="Genomic_DNA"/>
</dbReference>
<dbReference type="SMR" id="Q3ANW4"/>
<dbReference type="STRING" id="340177.Cag_0066"/>
<dbReference type="KEGG" id="cch:Cag_0066"/>
<dbReference type="eggNOG" id="COG0711">
    <property type="taxonomic scope" value="Bacteria"/>
</dbReference>
<dbReference type="HOGENOM" id="CLU_079215_4_1_10"/>
<dbReference type="OrthoDB" id="9795289at2"/>
<dbReference type="GO" id="GO:0005886">
    <property type="term" value="C:plasma membrane"/>
    <property type="evidence" value="ECO:0007669"/>
    <property type="project" value="UniProtKB-SubCell"/>
</dbReference>
<dbReference type="GO" id="GO:0045259">
    <property type="term" value="C:proton-transporting ATP synthase complex"/>
    <property type="evidence" value="ECO:0007669"/>
    <property type="project" value="UniProtKB-KW"/>
</dbReference>
<dbReference type="GO" id="GO:0046933">
    <property type="term" value="F:proton-transporting ATP synthase activity, rotational mechanism"/>
    <property type="evidence" value="ECO:0007669"/>
    <property type="project" value="UniProtKB-UniRule"/>
</dbReference>
<dbReference type="GO" id="GO:0046961">
    <property type="term" value="F:proton-transporting ATPase activity, rotational mechanism"/>
    <property type="evidence" value="ECO:0007669"/>
    <property type="project" value="TreeGrafter"/>
</dbReference>
<dbReference type="CDD" id="cd06503">
    <property type="entry name" value="ATP-synt_Fo_b"/>
    <property type="match status" value="1"/>
</dbReference>
<dbReference type="Gene3D" id="1.20.5.620">
    <property type="entry name" value="F1F0 ATP synthase subunit B, membrane domain"/>
    <property type="match status" value="1"/>
</dbReference>
<dbReference type="HAMAP" id="MF_01398">
    <property type="entry name" value="ATP_synth_b_bprime"/>
    <property type="match status" value="1"/>
</dbReference>
<dbReference type="InterPro" id="IPR028987">
    <property type="entry name" value="ATP_synth_B-like_membr_sf"/>
</dbReference>
<dbReference type="InterPro" id="IPR002146">
    <property type="entry name" value="ATP_synth_b/b'su_bac/chlpt"/>
</dbReference>
<dbReference type="InterPro" id="IPR005864">
    <property type="entry name" value="ATP_synth_F0_bsu_bac"/>
</dbReference>
<dbReference type="InterPro" id="IPR050059">
    <property type="entry name" value="ATP_synthase_B_chain"/>
</dbReference>
<dbReference type="NCBIfam" id="TIGR01144">
    <property type="entry name" value="ATP_synt_b"/>
    <property type="match status" value="1"/>
</dbReference>
<dbReference type="NCBIfam" id="NF011042">
    <property type="entry name" value="PRK14472.1"/>
    <property type="match status" value="1"/>
</dbReference>
<dbReference type="PANTHER" id="PTHR33445:SF1">
    <property type="entry name" value="ATP SYNTHASE SUBUNIT B"/>
    <property type="match status" value="1"/>
</dbReference>
<dbReference type="PANTHER" id="PTHR33445">
    <property type="entry name" value="ATP SYNTHASE SUBUNIT B', CHLOROPLASTIC"/>
    <property type="match status" value="1"/>
</dbReference>
<dbReference type="Pfam" id="PF00430">
    <property type="entry name" value="ATP-synt_B"/>
    <property type="match status" value="1"/>
</dbReference>
<dbReference type="SUPFAM" id="SSF81573">
    <property type="entry name" value="F1F0 ATP synthase subunit B, membrane domain"/>
    <property type="match status" value="1"/>
</dbReference>
<protein>
    <recommendedName>
        <fullName evidence="2">ATP synthase subunit b</fullName>
    </recommendedName>
    <alternativeName>
        <fullName evidence="2">ATP synthase F(0) sector subunit b</fullName>
    </alternativeName>
    <alternativeName>
        <fullName evidence="2">ATPase subunit I</fullName>
    </alternativeName>
    <alternativeName>
        <fullName evidence="2">F-type ATPase subunit b</fullName>
        <shortName evidence="2">F-ATPase subunit b</shortName>
    </alternativeName>
</protein>
<keyword id="KW-0066">ATP synthesis</keyword>
<keyword id="KW-0997">Cell inner membrane</keyword>
<keyword id="KW-1003">Cell membrane</keyword>
<keyword id="KW-0138">CF(0)</keyword>
<keyword id="KW-0375">Hydrogen ion transport</keyword>
<keyword id="KW-0406">Ion transport</keyword>
<keyword id="KW-0472">Membrane</keyword>
<keyword id="KW-0812">Transmembrane</keyword>
<keyword id="KW-1133">Transmembrane helix</keyword>
<keyword id="KW-0813">Transport</keyword>
<name>ATPF_CHLCH</name>
<feature type="chain" id="PRO_0000368408" description="ATP synthase subunit b">
    <location>
        <begin position="1"/>
        <end position="175"/>
    </location>
</feature>
<feature type="transmembrane region" description="Helical" evidence="2">
    <location>
        <begin position="20"/>
        <end position="40"/>
    </location>
</feature>
<accession>Q3ANW4</accession>
<organism>
    <name type="scientific">Chlorobium chlorochromatii (strain CaD3)</name>
    <dbReference type="NCBI Taxonomy" id="340177"/>
    <lineage>
        <taxon>Bacteria</taxon>
        <taxon>Pseudomonadati</taxon>
        <taxon>Chlorobiota</taxon>
        <taxon>Chlorobiia</taxon>
        <taxon>Chlorobiales</taxon>
        <taxon>Chlorobiaceae</taxon>
        <taxon>Chlorobium/Pelodictyon group</taxon>
        <taxon>Chlorobium</taxon>
    </lineage>
</organism>
<proteinExistence type="inferred from homology"/>
<sequence length="175" mass="19454">MLTSGTILLAGSLLSPNPGLIFWTAITFVIVLLILKKIAWGPIIGALEEREKGIQSSIDRAEKAKDEAEAILRKNRELLSKADAESEKIVREGKEYAEKLRTDITEKAHTEAAKMIASAKEEIEQEKRRALDVLRNEVADLAVLGAERIIRESLNADMQKKVVASMIQDMSSKRN</sequence>